<keyword id="KW-0963">Cytoplasm</keyword>
<keyword id="KW-0251">Elongation factor</keyword>
<keyword id="KW-0342">GTP-binding</keyword>
<keyword id="KW-0378">Hydrolase</keyword>
<keyword id="KW-0460">Magnesium</keyword>
<keyword id="KW-0479">Metal-binding</keyword>
<keyword id="KW-0547">Nucleotide-binding</keyword>
<keyword id="KW-0648">Protein biosynthesis</keyword>
<keyword id="KW-1185">Reference proteome</keyword>
<feature type="chain" id="PRO_0000337329" description="Elongation factor Tu">
    <location>
        <begin position="1"/>
        <end position="396"/>
    </location>
</feature>
<feature type="domain" description="tr-type G">
    <location>
        <begin position="10"/>
        <end position="206"/>
    </location>
</feature>
<feature type="region of interest" description="G1" evidence="1">
    <location>
        <begin position="19"/>
        <end position="26"/>
    </location>
</feature>
<feature type="region of interest" description="G2" evidence="1">
    <location>
        <begin position="60"/>
        <end position="64"/>
    </location>
</feature>
<feature type="region of interest" description="G3" evidence="1">
    <location>
        <begin position="81"/>
        <end position="84"/>
    </location>
</feature>
<feature type="region of interest" description="G4" evidence="1">
    <location>
        <begin position="136"/>
        <end position="139"/>
    </location>
</feature>
<feature type="region of interest" description="G5" evidence="1">
    <location>
        <begin position="174"/>
        <end position="176"/>
    </location>
</feature>
<feature type="binding site" evidence="2">
    <location>
        <begin position="19"/>
        <end position="26"/>
    </location>
    <ligand>
        <name>GTP</name>
        <dbReference type="ChEBI" id="CHEBI:37565"/>
    </ligand>
</feature>
<feature type="binding site" evidence="2">
    <location>
        <position position="26"/>
    </location>
    <ligand>
        <name>Mg(2+)</name>
        <dbReference type="ChEBI" id="CHEBI:18420"/>
    </ligand>
</feature>
<feature type="binding site" evidence="2">
    <location>
        <begin position="81"/>
        <end position="85"/>
    </location>
    <ligand>
        <name>GTP</name>
        <dbReference type="ChEBI" id="CHEBI:37565"/>
    </ligand>
</feature>
<feature type="binding site" evidence="2">
    <location>
        <begin position="136"/>
        <end position="139"/>
    </location>
    <ligand>
        <name>GTP</name>
        <dbReference type="ChEBI" id="CHEBI:37565"/>
    </ligand>
</feature>
<accession>Q7TT91</accession>
<evidence type="ECO:0000250" key="1"/>
<evidence type="ECO:0000255" key="2">
    <source>
        <dbReference type="HAMAP-Rule" id="MF_00118"/>
    </source>
</evidence>
<dbReference type="EC" id="3.6.5.3" evidence="2"/>
<dbReference type="EMBL" id="BX640411">
    <property type="protein sequence ID" value="CAE40387.1"/>
    <property type="molecule type" value="Genomic_DNA"/>
</dbReference>
<dbReference type="EMBL" id="BX640422">
    <property type="protein sequence ID" value="CAE43869.1"/>
    <property type="molecule type" value="Genomic_DNA"/>
</dbReference>
<dbReference type="RefSeq" id="NP_878925.1">
    <property type="nucleotide sequence ID" value="NC_002929.2"/>
</dbReference>
<dbReference type="RefSeq" id="NP_882121.1">
    <property type="nucleotide sequence ID" value="NC_002929.2"/>
</dbReference>
<dbReference type="SMR" id="Q7TT91"/>
<dbReference type="STRING" id="257313.BP0007"/>
<dbReference type="PaxDb" id="257313-BP0007"/>
<dbReference type="KEGG" id="bpe:BP0007"/>
<dbReference type="KEGG" id="bpe:BP3611"/>
<dbReference type="PATRIC" id="fig|257313.5.peg.3909"/>
<dbReference type="eggNOG" id="COG0050">
    <property type="taxonomic scope" value="Bacteria"/>
</dbReference>
<dbReference type="HOGENOM" id="CLU_007265_0_0_4"/>
<dbReference type="Proteomes" id="UP000002676">
    <property type="component" value="Chromosome"/>
</dbReference>
<dbReference type="GO" id="GO:0005829">
    <property type="term" value="C:cytosol"/>
    <property type="evidence" value="ECO:0007669"/>
    <property type="project" value="TreeGrafter"/>
</dbReference>
<dbReference type="GO" id="GO:0005525">
    <property type="term" value="F:GTP binding"/>
    <property type="evidence" value="ECO:0007669"/>
    <property type="project" value="UniProtKB-UniRule"/>
</dbReference>
<dbReference type="GO" id="GO:0003924">
    <property type="term" value="F:GTPase activity"/>
    <property type="evidence" value="ECO:0007669"/>
    <property type="project" value="InterPro"/>
</dbReference>
<dbReference type="GO" id="GO:0097216">
    <property type="term" value="F:guanosine tetraphosphate binding"/>
    <property type="evidence" value="ECO:0007669"/>
    <property type="project" value="UniProtKB-ARBA"/>
</dbReference>
<dbReference type="GO" id="GO:0003746">
    <property type="term" value="F:translation elongation factor activity"/>
    <property type="evidence" value="ECO:0007669"/>
    <property type="project" value="UniProtKB-UniRule"/>
</dbReference>
<dbReference type="CDD" id="cd01884">
    <property type="entry name" value="EF_Tu"/>
    <property type="match status" value="1"/>
</dbReference>
<dbReference type="CDD" id="cd03697">
    <property type="entry name" value="EFTU_II"/>
    <property type="match status" value="1"/>
</dbReference>
<dbReference type="CDD" id="cd03707">
    <property type="entry name" value="EFTU_III"/>
    <property type="match status" value="1"/>
</dbReference>
<dbReference type="FunFam" id="2.40.30.10:FF:000001">
    <property type="entry name" value="Elongation factor Tu"/>
    <property type="match status" value="1"/>
</dbReference>
<dbReference type="FunFam" id="3.40.50.300:FF:000003">
    <property type="entry name" value="Elongation factor Tu"/>
    <property type="match status" value="1"/>
</dbReference>
<dbReference type="Gene3D" id="3.40.50.300">
    <property type="entry name" value="P-loop containing nucleotide triphosphate hydrolases"/>
    <property type="match status" value="1"/>
</dbReference>
<dbReference type="Gene3D" id="2.40.30.10">
    <property type="entry name" value="Translation factors"/>
    <property type="match status" value="2"/>
</dbReference>
<dbReference type="HAMAP" id="MF_00118_B">
    <property type="entry name" value="EF_Tu_B"/>
    <property type="match status" value="1"/>
</dbReference>
<dbReference type="InterPro" id="IPR041709">
    <property type="entry name" value="EF-Tu_GTP-bd"/>
</dbReference>
<dbReference type="InterPro" id="IPR050055">
    <property type="entry name" value="EF-Tu_GTPase"/>
</dbReference>
<dbReference type="InterPro" id="IPR004161">
    <property type="entry name" value="EFTu-like_2"/>
</dbReference>
<dbReference type="InterPro" id="IPR033720">
    <property type="entry name" value="EFTU_2"/>
</dbReference>
<dbReference type="InterPro" id="IPR031157">
    <property type="entry name" value="G_TR_CS"/>
</dbReference>
<dbReference type="InterPro" id="IPR027417">
    <property type="entry name" value="P-loop_NTPase"/>
</dbReference>
<dbReference type="InterPro" id="IPR005225">
    <property type="entry name" value="Small_GTP-bd"/>
</dbReference>
<dbReference type="InterPro" id="IPR000795">
    <property type="entry name" value="T_Tr_GTP-bd_dom"/>
</dbReference>
<dbReference type="InterPro" id="IPR009000">
    <property type="entry name" value="Transl_B-barrel_sf"/>
</dbReference>
<dbReference type="InterPro" id="IPR009001">
    <property type="entry name" value="Transl_elong_EF1A/Init_IF2_C"/>
</dbReference>
<dbReference type="InterPro" id="IPR004541">
    <property type="entry name" value="Transl_elong_EFTu/EF1A_bac/org"/>
</dbReference>
<dbReference type="InterPro" id="IPR004160">
    <property type="entry name" value="Transl_elong_EFTu/EF1A_C"/>
</dbReference>
<dbReference type="NCBIfam" id="TIGR00485">
    <property type="entry name" value="EF-Tu"/>
    <property type="match status" value="1"/>
</dbReference>
<dbReference type="NCBIfam" id="NF000766">
    <property type="entry name" value="PRK00049.1"/>
    <property type="match status" value="1"/>
</dbReference>
<dbReference type="NCBIfam" id="NF009372">
    <property type="entry name" value="PRK12735.1"/>
    <property type="match status" value="1"/>
</dbReference>
<dbReference type="NCBIfam" id="NF009373">
    <property type="entry name" value="PRK12736.1"/>
    <property type="match status" value="1"/>
</dbReference>
<dbReference type="NCBIfam" id="TIGR00231">
    <property type="entry name" value="small_GTP"/>
    <property type="match status" value="1"/>
</dbReference>
<dbReference type="PANTHER" id="PTHR43721:SF22">
    <property type="entry name" value="ELONGATION FACTOR TU, MITOCHONDRIAL"/>
    <property type="match status" value="1"/>
</dbReference>
<dbReference type="PANTHER" id="PTHR43721">
    <property type="entry name" value="ELONGATION FACTOR TU-RELATED"/>
    <property type="match status" value="1"/>
</dbReference>
<dbReference type="Pfam" id="PF00009">
    <property type="entry name" value="GTP_EFTU"/>
    <property type="match status" value="1"/>
</dbReference>
<dbReference type="Pfam" id="PF03144">
    <property type="entry name" value="GTP_EFTU_D2"/>
    <property type="match status" value="1"/>
</dbReference>
<dbReference type="Pfam" id="PF03143">
    <property type="entry name" value="GTP_EFTU_D3"/>
    <property type="match status" value="1"/>
</dbReference>
<dbReference type="PRINTS" id="PR00315">
    <property type="entry name" value="ELONGATNFCT"/>
</dbReference>
<dbReference type="SUPFAM" id="SSF50465">
    <property type="entry name" value="EF-Tu/eEF-1alpha/eIF2-gamma C-terminal domain"/>
    <property type="match status" value="1"/>
</dbReference>
<dbReference type="SUPFAM" id="SSF52540">
    <property type="entry name" value="P-loop containing nucleoside triphosphate hydrolases"/>
    <property type="match status" value="1"/>
</dbReference>
<dbReference type="SUPFAM" id="SSF50447">
    <property type="entry name" value="Translation proteins"/>
    <property type="match status" value="1"/>
</dbReference>
<dbReference type="PROSITE" id="PS00301">
    <property type="entry name" value="G_TR_1"/>
    <property type="match status" value="1"/>
</dbReference>
<dbReference type="PROSITE" id="PS51722">
    <property type="entry name" value="G_TR_2"/>
    <property type="match status" value="1"/>
</dbReference>
<reference key="1">
    <citation type="journal article" date="2003" name="Nat. Genet.">
        <title>Comparative analysis of the genome sequences of Bordetella pertussis, Bordetella parapertussis and Bordetella bronchiseptica.</title>
        <authorList>
            <person name="Parkhill J."/>
            <person name="Sebaihia M."/>
            <person name="Preston A."/>
            <person name="Murphy L.D."/>
            <person name="Thomson N.R."/>
            <person name="Harris D.E."/>
            <person name="Holden M.T.G."/>
            <person name="Churcher C.M."/>
            <person name="Bentley S.D."/>
            <person name="Mungall K.L."/>
            <person name="Cerdeno-Tarraga A.-M."/>
            <person name="Temple L."/>
            <person name="James K.D."/>
            <person name="Harris B."/>
            <person name="Quail M.A."/>
            <person name="Achtman M."/>
            <person name="Atkin R."/>
            <person name="Baker S."/>
            <person name="Basham D."/>
            <person name="Bason N."/>
            <person name="Cherevach I."/>
            <person name="Chillingworth T."/>
            <person name="Collins M."/>
            <person name="Cronin A."/>
            <person name="Davis P."/>
            <person name="Doggett J."/>
            <person name="Feltwell T."/>
            <person name="Goble A."/>
            <person name="Hamlin N."/>
            <person name="Hauser H."/>
            <person name="Holroyd S."/>
            <person name="Jagels K."/>
            <person name="Leather S."/>
            <person name="Moule S."/>
            <person name="Norberczak H."/>
            <person name="O'Neil S."/>
            <person name="Ormond D."/>
            <person name="Price C."/>
            <person name="Rabbinowitsch E."/>
            <person name="Rutter S."/>
            <person name="Sanders M."/>
            <person name="Saunders D."/>
            <person name="Seeger K."/>
            <person name="Sharp S."/>
            <person name="Simmonds M."/>
            <person name="Skelton J."/>
            <person name="Squares R."/>
            <person name="Squares S."/>
            <person name="Stevens K."/>
            <person name="Unwin L."/>
            <person name="Whitehead S."/>
            <person name="Barrell B.G."/>
            <person name="Maskell D.J."/>
        </authorList>
    </citation>
    <scope>NUCLEOTIDE SEQUENCE [LARGE SCALE GENOMIC DNA]</scope>
    <source>
        <strain>Tohama I / ATCC BAA-589 / NCTC 13251</strain>
    </source>
</reference>
<sequence length="396" mass="42916">MAKGKFERTKPHVNVGTIGHVDHGKTTLTAAITTVLSNKFGGEARGYDQIDAAPEEKARGITINTSHVEYETETRHYAHVDCPGHADYVKNMITGAAQMDGAILVVSAADGPMPQTREHILLSRQVGVPYIIVFLNKADMVDDAELLELVEMEVRELLSKYDFPGDDTPIVKGSAKLALEGDKGELGEQAILSLAQALDTYIPTPERAVDGAFLMPVEDVFSISGRGTVVTGRIERGVVKVGEEIEIVGIKPTVKTTCTGVEMFRKLLDQGQAGDNVGILLRGTKREDVERGQVLAKPGSINPHTDFTAEVYILSKEEGGRHTPFFNGYRPQFYFRTTDVTGTIDLPADKEMVLPGDNVSMTVKLLAPIAMEEGLRFAIREGGRTVGAGVVAKIIK</sequence>
<proteinExistence type="inferred from homology"/>
<protein>
    <recommendedName>
        <fullName evidence="2">Elongation factor Tu</fullName>
        <shortName evidence="2">EF-Tu</shortName>
        <ecNumber evidence="2">3.6.5.3</ecNumber>
    </recommendedName>
</protein>
<organism>
    <name type="scientific">Bordetella pertussis (strain Tohama I / ATCC BAA-589 / NCTC 13251)</name>
    <dbReference type="NCBI Taxonomy" id="257313"/>
    <lineage>
        <taxon>Bacteria</taxon>
        <taxon>Pseudomonadati</taxon>
        <taxon>Pseudomonadota</taxon>
        <taxon>Betaproteobacteria</taxon>
        <taxon>Burkholderiales</taxon>
        <taxon>Alcaligenaceae</taxon>
        <taxon>Bordetella</taxon>
    </lineage>
</organism>
<gene>
    <name evidence="2" type="primary">tuf1</name>
    <name type="ordered locus">BP0007</name>
</gene>
<gene>
    <name evidence="2" type="primary">tuf2</name>
    <name type="ordered locus">BP3611</name>
</gene>
<comment type="function">
    <text evidence="2">GTP hydrolase that promotes the GTP-dependent binding of aminoacyl-tRNA to the A-site of ribosomes during protein biosynthesis.</text>
</comment>
<comment type="catalytic activity">
    <reaction evidence="2">
        <text>GTP + H2O = GDP + phosphate + H(+)</text>
        <dbReference type="Rhea" id="RHEA:19669"/>
        <dbReference type="ChEBI" id="CHEBI:15377"/>
        <dbReference type="ChEBI" id="CHEBI:15378"/>
        <dbReference type="ChEBI" id="CHEBI:37565"/>
        <dbReference type="ChEBI" id="CHEBI:43474"/>
        <dbReference type="ChEBI" id="CHEBI:58189"/>
        <dbReference type="EC" id="3.6.5.3"/>
    </reaction>
    <physiologicalReaction direction="left-to-right" evidence="2">
        <dbReference type="Rhea" id="RHEA:19670"/>
    </physiologicalReaction>
</comment>
<comment type="subunit">
    <text evidence="2">Monomer.</text>
</comment>
<comment type="subcellular location">
    <subcellularLocation>
        <location evidence="2">Cytoplasm</location>
    </subcellularLocation>
</comment>
<comment type="similarity">
    <text evidence="2">Belongs to the TRAFAC class translation factor GTPase superfamily. Classic translation factor GTPase family. EF-Tu/EF-1A subfamily.</text>
</comment>
<name>EFTU_BORPE</name>